<accession>Q9D7I9</accession>
<accession>A2AQ62</accession>
<accession>Q3V1F9</accession>
<proteinExistence type="evidence at transcript level"/>
<keyword id="KW-0007">Acetylation</keyword>
<keyword id="KW-0012">Acyltransferase</keyword>
<keyword id="KW-0106">Calcium</keyword>
<keyword id="KW-0963">Cytoplasm</keyword>
<keyword id="KW-0479">Metal-binding</keyword>
<keyword id="KW-1185">Reference proteome</keyword>
<keyword id="KW-0808">Transferase</keyword>
<reference key="1">
    <citation type="journal article" date="2005" name="Science">
        <title>The transcriptional landscape of the mammalian genome.</title>
        <authorList>
            <person name="Carninci P."/>
            <person name="Kasukawa T."/>
            <person name="Katayama S."/>
            <person name="Gough J."/>
            <person name="Frith M.C."/>
            <person name="Maeda N."/>
            <person name="Oyama R."/>
            <person name="Ravasi T."/>
            <person name="Lenhard B."/>
            <person name="Wells C."/>
            <person name="Kodzius R."/>
            <person name="Shimokawa K."/>
            <person name="Bajic V.B."/>
            <person name="Brenner S.E."/>
            <person name="Batalov S."/>
            <person name="Forrest A.R."/>
            <person name="Zavolan M."/>
            <person name="Davis M.J."/>
            <person name="Wilming L.G."/>
            <person name="Aidinis V."/>
            <person name="Allen J.E."/>
            <person name="Ambesi-Impiombato A."/>
            <person name="Apweiler R."/>
            <person name="Aturaliya R.N."/>
            <person name="Bailey T.L."/>
            <person name="Bansal M."/>
            <person name="Baxter L."/>
            <person name="Beisel K.W."/>
            <person name="Bersano T."/>
            <person name="Bono H."/>
            <person name="Chalk A.M."/>
            <person name="Chiu K.P."/>
            <person name="Choudhary V."/>
            <person name="Christoffels A."/>
            <person name="Clutterbuck D.R."/>
            <person name="Crowe M.L."/>
            <person name="Dalla E."/>
            <person name="Dalrymple B.P."/>
            <person name="de Bono B."/>
            <person name="Della Gatta G."/>
            <person name="di Bernardo D."/>
            <person name="Down T."/>
            <person name="Engstrom P."/>
            <person name="Fagiolini M."/>
            <person name="Faulkner G."/>
            <person name="Fletcher C.F."/>
            <person name="Fukushima T."/>
            <person name="Furuno M."/>
            <person name="Futaki S."/>
            <person name="Gariboldi M."/>
            <person name="Georgii-Hemming P."/>
            <person name="Gingeras T.R."/>
            <person name="Gojobori T."/>
            <person name="Green R.E."/>
            <person name="Gustincich S."/>
            <person name="Harbers M."/>
            <person name="Hayashi Y."/>
            <person name="Hensch T.K."/>
            <person name="Hirokawa N."/>
            <person name="Hill D."/>
            <person name="Huminiecki L."/>
            <person name="Iacono M."/>
            <person name="Ikeo K."/>
            <person name="Iwama A."/>
            <person name="Ishikawa T."/>
            <person name="Jakt M."/>
            <person name="Kanapin A."/>
            <person name="Katoh M."/>
            <person name="Kawasawa Y."/>
            <person name="Kelso J."/>
            <person name="Kitamura H."/>
            <person name="Kitano H."/>
            <person name="Kollias G."/>
            <person name="Krishnan S.P."/>
            <person name="Kruger A."/>
            <person name="Kummerfeld S.K."/>
            <person name="Kurochkin I.V."/>
            <person name="Lareau L.F."/>
            <person name="Lazarevic D."/>
            <person name="Lipovich L."/>
            <person name="Liu J."/>
            <person name="Liuni S."/>
            <person name="McWilliam S."/>
            <person name="Madan Babu M."/>
            <person name="Madera M."/>
            <person name="Marchionni L."/>
            <person name="Matsuda H."/>
            <person name="Matsuzawa S."/>
            <person name="Miki H."/>
            <person name="Mignone F."/>
            <person name="Miyake S."/>
            <person name="Morris K."/>
            <person name="Mottagui-Tabar S."/>
            <person name="Mulder N."/>
            <person name="Nakano N."/>
            <person name="Nakauchi H."/>
            <person name="Ng P."/>
            <person name="Nilsson R."/>
            <person name="Nishiguchi S."/>
            <person name="Nishikawa S."/>
            <person name="Nori F."/>
            <person name="Ohara O."/>
            <person name="Okazaki Y."/>
            <person name="Orlando V."/>
            <person name="Pang K.C."/>
            <person name="Pavan W.J."/>
            <person name="Pavesi G."/>
            <person name="Pesole G."/>
            <person name="Petrovsky N."/>
            <person name="Piazza S."/>
            <person name="Reed J."/>
            <person name="Reid J.F."/>
            <person name="Ring B.Z."/>
            <person name="Ringwald M."/>
            <person name="Rost B."/>
            <person name="Ruan Y."/>
            <person name="Salzberg S.L."/>
            <person name="Sandelin A."/>
            <person name="Schneider C."/>
            <person name="Schoenbach C."/>
            <person name="Sekiguchi K."/>
            <person name="Semple C.A."/>
            <person name="Seno S."/>
            <person name="Sessa L."/>
            <person name="Sheng Y."/>
            <person name="Shibata Y."/>
            <person name="Shimada H."/>
            <person name="Shimada K."/>
            <person name="Silva D."/>
            <person name="Sinclair B."/>
            <person name="Sperling S."/>
            <person name="Stupka E."/>
            <person name="Sugiura K."/>
            <person name="Sultana R."/>
            <person name="Takenaka Y."/>
            <person name="Taki K."/>
            <person name="Tammoja K."/>
            <person name="Tan S.L."/>
            <person name="Tang S."/>
            <person name="Taylor M.S."/>
            <person name="Tegner J."/>
            <person name="Teichmann S.A."/>
            <person name="Ueda H.R."/>
            <person name="van Nimwegen E."/>
            <person name="Verardo R."/>
            <person name="Wei C.L."/>
            <person name="Yagi K."/>
            <person name="Yamanishi H."/>
            <person name="Zabarovsky E."/>
            <person name="Zhu S."/>
            <person name="Zimmer A."/>
            <person name="Hide W."/>
            <person name="Bult C."/>
            <person name="Grimmond S.M."/>
            <person name="Teasdale R.D."/>
            <person name="Liu E.T."/>
            <person name="Brusic V."/>
            <person name="Quackenbush J."/>
            <person name="Wahlestedt C."/>
            <person name="Mattick J.S."/>
            <person name="Hume D.A."/>
            <person name="Kai C."/>
            <person name="Sasaki D."/>
            <person name="Tomaru Y."/>
            <person name="Fukuda S."/>
            <person name="Kanamori-Katayama M."/>
            <person name="Suzuki M."/>
            <person name="Aoki J."/>
            <person name="Arakawa T."/>
            <person name="Iida J."/>
            <person name="Imamura K."/>
            <person name="Itoh M."/>
            <person name="Kato T."/>
            <person name="Kawaji H."/>
            <person name="Kawagashira N."/>
            <person name="Kawashima T."/>
            <person name="Kojima M."/>
            <person name="Kondo S."/>
            <person name="Konno H."/>
            <person name="Nakano K."/>
            <person name="Ninomiya N."/>
            <person name="Nishio T."/>
            <person name="Okada M."/>
            <person name="Plessy C."/>
            <person name="Shibata K."/>
            <person name="Shiraki T."/>
            <person name="Suzuki S."/>
            <person name="Tagami M."/>
            <person name="Waki K."/>
            <person name="Watahiki A."/>
            <person name="Okamura-Oho Y."/>
            <person name="Suzuki H."/>
            <person name="Kawai J."/>
            <person name="Hayashizaki Y."/>
        </authorList>
    </citation>
    <scope>NUCLEOTIDE SEQUENCE [LARGE SCALE MRNA]</scope>
    <source>
        <strain>C57BL/6J</strain>
        <tissue>Skin</tissue>
        <tissue>Tongue</tissue>
    </source>
</reference>
<reference key="2">
    <citation type="journal article" date="2009" name="PLoS Biol.">
        <title>Lineage-specific biology revealed by a finished genome assembly of the mouse.</title>
        <authorList>
            <person name="Church D.M."/>
            <person name="Goodstadt L."/>
            <person name="Hillier L.W."/>
            <person name="Zody M.C."/>
            <person name="Goldstein S."/>
            <person name="She X."/>
            <person name="Bult C.J."/>
            <person name="Agarwala R."/>
            <person name="Cherry J.L."/>
            <person name="DiCuccio M."/>
            <person name="Hlavina W."/>
            <person name="Kapustin Y."/>
            <person name="Meric P."/>
            <person name="Maglott D."/>
            <person name="Birtle Z."/>
            <person name="Marques A.C."/>
            <person name="Graves T."/>
            <person name="Zhou S."/>
            <person name="Teague B."/>
            <person name="Potamousis K."/>
            <person name="Churas C."/>
            <person name="Place M."/>
            <person name="Herschleb J."/>
            <person name="Runnheim R."/>
            <person name="Forrest D."/>
            <person name="Amos-Landgraf J."/>
            <person name="Schwartz D.C."/>
            <person name="Cheng Z."/>
            <person name="Lindblad-Toh K."/>
            <person name="Eichler E.E."/>
            <person name="Ponting C.P."/>
        </authorList>
    </citation>
    <scope>NUCLEOTIDE SEQUENCE [LARGE SCALE GENOMIC DNA]</scope>
    <source>
        <strain>C57BL/6J</strain>
    </source>
</reference>
<gene>
    <name type="primary">Tgm5</name>
</gene>
<comment type="function">
    <text evidence="1">Catalyzes the cross-linking of proteins and the conjugation of polyamines to proteins. Contributes to the formation of the cornified cell envelope of keratinocytes (By similarity).</text>
</comment>
<comment type="catalytic activity">
    <reaction evidence="3">
        <text>L-glutaminyl-[protein] + L-lysyl-[protein] = [protein]-L-lysyl-N(6)-5-L-glutamyl-[protein] + NH4(+)</text>
        <dbReference type="Rhea" id="RHEA:54816"/>
        <dbReference type="Rhea" id="RHEA-COMP:9752"/>
        <dbReference type="Rhea" id="RHEA-COMP:10207"/>
        <dbReference type="Rhea" id="RHEA-COMP:14005"/>
        <dbReference type="ChEBI" id="CHEBI:28938"/>
        <dbReference type="ChEBI" id="CHEBI:29969"/>
        <dbReference type="ChEBI" id="CHEBI:30011"/>
        <dbReference type="ChEBI" id="CHEBI:138370"/>
        <dbReference type="EC" id="2.3.2.13"/>
    </reaction>
</comment>
<comment type="cofactor">
    <cofactor evidence="1">
        <name>Ca(2+)</name>
        <dbReference type="ChEBI" id="CHEBI:29108"/>
    </cofactor>
    <text evidence="1">Binds 1 Ca(2+) ion per subunit.</text>
</comment>
<comment type="subcellular location">
    <subcellularLocation>
        <location evidence="1">Cytoplasm</location>
    </subcellularLocation>
    <text evidence="1">Associated with intermediate filaments.</text>
</comment>
<comment type="similarity">
    <text evidence="5">Belongs to the transglutaminase superfamily. Transglutaminase family.</text>
</comment>
<name>TGM5_MOUSE</name>
<sequence>MAQGCPITGLEVALTDLQSSQNNVRHHTEEISVDRLVVRRGQAFSITLYFKNRGFQPGMDSIMFVAETGPLPDLAKGTRAVFSFTGSGGPSPWIASLEANRANSLEVSLCAPPIAAVGRYLLKIRIDSYQGFVTAYQLGEFILLFNPWCPADSVYLESEPQRQEYVVNDYGFIYQGSKSWIRPCPWNYGQFEENIIDICLELLEKSLNFQVDPSTDCALRGSPVYTSRVVCAMINSNDDNGVLNGNWSENYVDGINPAEWTGSVAILKQWHATGCQPVRYGQCWVFAAVMCTVMRCLGIPTRVITNFDSGHDTDGNLIIDEYYDNTGRILENMKKDTVWNFHVWNECWMARKDLPPGYGGWQVLDATPQETSNGLYCCGPASVKAIKEGEIDLNYDTRFAFSMVNADCMSWLVYGGKEQKLHQDTATVGNFISTKSIQSDERDDITESYKYEEGSLQEREVFLKALQKLQATRSQGPHQANSNPFSSVPPRHNSARSPDSPSLQPSDVLQVSLKFELLDSPKMGQDINFVLLAVNMSPQFKDLKLNLSAQSLLHDGSPLVPFWQDTAFITLFPEEEKSYPCKILYSQYSQYLSTDKLIRISALGEEKNSPEKILVNKIITLTFPGIMINVLGAAFVNQPLTVQVVFSNPLSEPVEDCVLTLEGSGLFRKQQRVLIGVLKPHHKASITLKTVPFKSGQRQIQANLRSNRFKDIKGYKNVYVDIGL</sequence>
<protein>
    <recommendedName>
        <fullName>Protein-glutamine gamma-glutamyltransferase 5</fullName>
        <ecNumber>2.3.2.13</ecNumber>
    </recommendedName>
    <alternativeName>
        <fullName>Transglutaminase-5</fullName>
        <shortName>TGase-5</shortName>
    </alternativeName>
</protein>
<organism>
    <name type="scientific">Mus musculus</name>
    <name type="common">Mouse</name>
    <dbReference type="NCBI Taxonomy" id="10090"/>
    <lineage>
        <taxon>Eukaryota</taxon>
        <taxon>Metazoa</taxon>
        <taxon>Chordata</taxon>
        <taxon>Craniata</taxon>
        <taxon>Vertebrata</taxon>
        <taxon>Euteleostomi</taxon>
        <taxon>Mammalia</taxon>
        <taxon>Eutheria</taxon>
        <taxon>Euarchontoglires</taxon>
        <taxon>Glires</taxon>
        <taxon>Rodentia</taxon>
        <taxon>Myomorpha</taxon>
        <taxon>Muroidea</taxon>
        <taxon>Muridae</taxon>
        <taxon>Murinae</taxon>
        <taxon>Mus</taxon>
        <taxon>Mus</taxon>
    </lineage>
</organism>
<dbReference type="EC" id="2.3.2.13"/>
<dbReference type="EMBL" id="AK009196">
    <property type="protein sequence ID" value="BAB26133.1"/>
    <property type="molecule type" value="mRNA"/>
</dbReference>
<dbReference type="EMBL" id="AK132482">
    <property type="protein sequence ID" value="BAE21192.1"/>
    <property type="molecule type" value="mRNA"/>
</dbReference>
<dbReference type="EMBL" id="AL844548">
    <property type="status" value="NOT_ANNOTATED_CDS"/>
    <property type="molecule type" value="Genomic_DNA"/>
</dbReference>
<dbReference type="CCDS" id="CCDS16632.1"/>
<dbReference type="RefSeq" id="NP_083075.1">
    <property type="nucleotide sequence ID" value="NM_028799.4"/>
</dbReference>
<dbReference type="SMR" id="Q9D7I9"/>
<dbReference type="FunCoup" id="Q9D7I9">
    <property type="interactions" value="5"/>
</dbReference>
<dbReference type="STRING" id="10090.ENSMUSP00000028721"/>
<dbReference type="PhosphoSitePlus" id="Q9D7I9"/>
<dbReference type="PaxDb" id="10090-ENSMUSP00000028721"/>
<dbReference type="ProteomicsDB" id="262903"/>
<dbReference type="Antibodypedia" id="23845">
    <property type="antibodies" value="182 antibodies from 27 providers"/>
</dbReference>
<dbReference type="DNASU" id="74176"/>
<dbReference type="Ensembl" id="ENSMUST00000028721.8">
    <property type="protein sequence ID" value="ENSMUSP00000028721.8"/>
    <property type="gene ID" value="ENSMUSG00000053675.9"/>
</dbReference>
<dbReference type="GeneID" id="74176"/>
<dbReference type="KEGG" id="mmu:74176"/>
<dbReference type="UCSC" id="uc008lxl.1">
    <property type="organism name" value="mouse"/>
</dbReference>
<dbReference type="AGR" id="MGI:1921426"/>
<dbReference type="CTD" id="9333"/>
<dbReference type="MGI" id="MGI:1921426">
    <property type="gene designation" value="Tgm5"/>
</dbReference>
<dbReference type="VEuPathDB" id="HostDB:ENSMUSG00000053675"/>
<dbReference type="eggNOG" id="ENOG502QTRA">
    <property type="taxonomic scope" value="Eukaryota"/>
</dbReference>
<dbReference type="GeneTree" id="ENSGT01050000244866"/>
<dbReference type="HOGENOM" id="CLU_013435_1_0_1"/>
<dbReference type="InParanoid" id="Q9D7I9"/>
<dbReference type="OMA" id="LAPFWQD"/>
<dbReference type="OrthoDB" id="437511at2759"/>
<dbReference type="PhylomeDB" id="Q9D7I9"/>
<dbReference type="TreeFam" id="TF324278"/>
<dbReference type="BioGRID-ORCS" id="74176">
    <property type="hits" value="1 hit in 76 CRISPR screens"/>
</dbReference>
<dbReference type="PRO" id="PR:Q9D7I9"/>
<dbReference type="Proteomes" id="UP000000589">
    <property type="component" value="Chromosome 2"/>
</dbReference>
<dbReference type="RNAct" id="Q9D7I9">
    <property type="molecule type" value="protein"/>
</dbReference>
<dbReference type="Bgee" id="ENSMUSG00000053675">
    <property type="expression patterns" value="Expressed in coelomic epithelium and 54 other cell types or tissues"/>
</dbReference>
<dbReference type="GO" id="GO:0005737">
    <property type="term" value="C:cytoplasm"/>
    <property type="evidence" value="ECO:0007669"/>
    <property type="project" value="UniProtKB-SubCell"/>
</dbReference>
<dbReference type="GO" id="GO:0046872">
    <property type="term" value="F:metal ion binding"/>
    <property type="evidence" value="ECO:0007669"/>
    <property type="project" value="UniProtKB-KW"/>
</dbReference>
<dbReference type="GO" id="GO:0003810">
    <property type="term" value="F:protein-glutamine gamma-glutamyltransferase activity"/>
    <property type="evidence" value="ECO:0007669"/>
    <property type="project" value="UniProtKB-EC"/>
</dbReference>
<dbReference type="FunFam" id="2.60.40.10:FF:000090">
    <property type="entry name" value="Protein-glutamine gamma-glutamyltransferase 2"/>
    <property type="match status" value="1"/>
</dbReference>
<dbReference type="FunFam" id="2.60.40.10:FF:000278">
    <property type="entry name" value="Protein-glutamine gamma-glutamyltransferase 2"/>
    <property type="match status" value="1"/>
</dbReference>
<dbReference type="FunFam" id="3.90.260.10:FF:000001">
    <property type="entry name" value="Protein-glutamine gamma-glutamyltransferase 2"/>
    <property type="match status" value="1"/>
</dbReference>
<dbReference type="FunFam" id="2.60.40.10:FF:000807">
    <property type="entry name" value="Protein-glutamine gamma-glutamyltransferase 5"/>
    <property type="match status" value="1"/>
</dbReference>
<dbReference type="Gene3D" id="2.60.40.10">
    <property type="entry name" value="Immunoglobulins"/>
    <property type="match status" value="3"/>
</dbReference>
<dbReference type="Gene3D" id="3.90.260.10">
    <property type="entry name" value="Transglutaminase-like"/>
    <property type="match status" value="1"/>
</dbReference>
<dbReference type="InterPro" id="IPR013783">
    <property type="entry name" value="Ig-like_fold"/>
</dbReference>
<dbReference type="InterPro" id="IPR014756">
    <property type="entry name" value="Ig_E-set"/>
</dbReference>
<dbReference type="InterPro" id="IPR038765">
    <property type="entry name" value="Papain-like_cys_pep_sf"/>
</dbReference>
<dbReference type="InterPro" id="IPR050779">
    <property type="entry name" value="Transglutaminase"/>
</dbReference>
<dbReference type="InterPro" id="IPR002931">
    <property type="entry name" value="Transglutaminase-like"/>
</dbReference>
<dbReference type="InterPro" id="IPR036985">
    <property type="entry name" value="Transglutaminase-like_sf"/>
</dbReference>
<dbReference type="InterPro" id="IPR023608">
    <property type="entry name" value="Transglutaminase_animal"/>
</dbReference>
<dbReference type="InterPro" id="IPR013808">
    <property type="entry name" value="Transglutaminase_AS"/>
</dbReference>
<dbReference type="InterPro" id="IPR008958">
    <property type="entry name" value="Transglutaminase_C"/>
</dbReference>
<dbReference type="InterPro" id="IPR036238">
    <property type="entry name" value="Transglutaminase_C_sf"/>
</dbReference>
<dbReference type="InterPro" id="IPR001102">
    <property type="entry name" value="Transglutaminase_N"/>
</dbReference>
<dbReference type="PANTHER" id="PTHR11590">
    <property type="entry name" value="PROTEIN-GLUTAMINE GAMMA-GLUTAMYLTRANSFERASE"/>
    <property type="match status" value="1"/>
</dbReference>
<dbReference type="PANTHER" id="PTHR11590:SF38">
    <property type="entry name" value="PROTEIN-GLUTAMINE GAMMA-GLUTAMYLTRANSFERASE 5"/>
    <property type="match status" value="1"/>
</dbReference>
<dbReference type="Pfam" id="PF00927">
    <property type="entry name" value="Transglut_C"/>
    <property type="match status" value="2"/>
</dbReference>
<dbReference type="Pfam" id="PF01841">
    <property type="entry name" value="Transglut_core"/>
    <property type="match status" value="1"/>
</dbReference>
<dbReference type="Pfam" id="PF00868">
    <property type="entry name" value="Transglut_N"/>
    <property type="match status" value="1"/>
</dbReference>
<dbReference type="PIRSF" id="PIRSF000459">
    <property type="entry name" value="TGM_EBP42"/>
    <property type="match status" value="1"/>
</dbReference>
<dbReference type="SMART" id="SM00460">
    <property type="entry name" value="TGc"/>
    <property type="match status" value="1"/>
</dbReference>
<dbReference type="SUPFAM" id="SSF54001">
    <property type="entry name" value="Cysteine proteinases"/>
    <property type="match status" value="1"/>
</dbReference>
<dbReference type="SUPFAM" id="SSF81296">
    <property type="entry name" value="E set domains"/>
    <property type="match status" value="1"/>
</dbReference>
<dbReference type="SUPFAM" id="SSF49309">
    <property type="entry name" value="Transglutaminase, two C-terminal domains"/>
    <property type="match status" value="2"/>
</dbReference>
<dbReference type="PROSITE" id="PS00547">
    <property type="entry name" value="TRANSGLUTAMINASES"/>
    <property type="match status" value="1"/>
</dbReference>
<feature type="initiator methionine" description="Removed" evidence="2">
    <location>
        <position position="1"/>
    </location>
</feature>
<feature type="chain" id="PRO_0000213714" description="Protein-glutamine gamma-glutamyltransferase 5">
    <location>
        <begin position="2"/>
        <end position="724"/>
    </location>
</feature>
<feature type="region of interest" description="Disordered" evidence="4">
    <location>
        <begin position="473"/>
        <end position="505"/>
    </location>
</feature>
<feature type="compositionally biased region" description="Polar residues" evidence="4">
    <location>
        <begin position="473"/>
        <end position="486"/>
    </location>
</feature>
<feature type="compositionally biased region" description="Polar residues" evidence="4">
    <location>
        <begin position="495"/>
        <end position="505"/>
    </location>
</feature>
<feature type="active site" evidence="3">
    <location>
        <position position="283"/>
    </location>
</feature>
<feature type="active site" evidence="3">
    <location>
        <position position="342"/>
    </location>
</feature>
<feature type="active site" evidence="3">
    <location>
        <position position="365"/>
    </location>
</feature>
<feature type="binding site" evidence="1">
    <location>
        <position position="405"/>
    </location>
    <ligand>
        <name>Ca(2+)</name>
        <dbReference type="ChEBI" id="CHEBI:29108"/>
    </ligand>
</feature>
<feature type="binding site" evidence="1">
    <location>
        <position position="407"/>
    </location>
    <ligand>
        <name>Ca(2+)</name>
        <dbReference type="ChEBI" id="CHEBI:29108"/>
    </ligand>
</feature>
<feature type="binding site" evidence="1">
    <location>
        <position position="453"/>
    </location>
    <ligand>
        <name>Ca(2+)</name>
        <dbReference type="ChEBI" id="CHEBI:29108"/>
    </ligand>
</feature>
<feature type="binding site" evidence="1">
    <location>
        <position position="458"/>
    </location>
    <ligand>
        <name>Ca(2+)</name>
        <dbReference type="ChEBI" id="CHEBI:29108"/>
    </ligand>
</feature>
<feature type="modified residue" description="N-acetylalanine" evidence="2">
    <location>
        <position position="2"/>
    </location>
</feature>
<evidence type="ECO:0000250" key="1"/>
<evidence type="ECO:0000250" key="2">
    <source>
        <dbReference type="UniProtKB" id="O43548"/>
    </source>
</evidence>
<evidence type="ECO:0000255" key="3">
    <source>
        <dbReference type="PROSITE-ProRule" id="PRU10024"/>
    </source>
</evidence>
<evidence type="ECO:0000256" key="4">
    <source>
        <dbReference type="SAM" id="MobiDB-lite"/>
    </source>
</evidence>
<evidence type="ECO:0000305" key="5"/>